<reference key="1">
    <citation type="journal article" date="2006" name="J. Virol.">
        <title>Psittacid herpesvirus 1 and infectious laryngotracheitis virus: Comparative genome sequence analysis of two avian alphaherpesviruses.</title>
        <authorList>
            <person name="Thureen D.R."/>
            <person name="Keeler C.L. Jr."/>
        </authorList>
    </citation>
    <scope>NUCLEOTIDE SEQUENCE [LARGE SCALE GENOMIC DNA]</scope>
</reference>
<sequence>MATDNARPRSRSLRRKSMGAEAALRDGAAQPAAAHKTKVIARSETGDDADEDAGADRDPGTRRGIDPWKLEPANDPFASNKEYGGKWGANGPADSAAKVLAAAWDIMALVDAEEVAKEQETFEAKTSPVSPFGAWPGGQSWRTLGDYSHAPILYPSAEVIEADALKVGAYVSRVVQCSRFVADKKAQRPTVRSLQSFLEAAFWRVMQNAYSTCLRLRPKLTAVSRSRRSGANWRKPSPSDPNWYAVSNQFLWRGMRVPSLLLPPDVPIEENAERGPTAAVFRNAGPALFIWPWARAPLDERDKRLVRAALWALDILDAAILASFPYAWRPHVGDKQFEEALDCLAEYFGLAVLLTETVLAALLDHTLAFMKSLGAGNYDDFEEDRFADPGKNKYLMGVEGVSLTRLNSAGTALATVCANTYAALRCLPSVATSSLTANYSAETRRARKPTREDLFSLLQHEALFYTIWLQRMATHLDFCSNVLVESAKKGKQEFPIRRSALVRHMWLQKLLSPLVVPVSLRDFAAAKKEAVADAKIETYVKSVQSTNKDPKGTIRFIASDNVKTLMASYEKYNPILDEPMIASRAFDDVISGYGGRTAGGQNRGD</sequence>
<protein>
    <recommendedName>
        <fullName>Tegument protein UL47 homolog</fullName>
    </recommendedName>
</protein>
<keyword id="KW-1035">Host cytoplasm</keyword>
<keyword id="KW-1048">Host nucleus</keyword>
<keyword id="KW-1185">Reference proteome</keyword>
<keyword id="KW-0946">Virion</keyword>
<keyword id="KW-0920">Virion tegument</keyword>
<evidence type="ECO:0000250" key="1">
    <source>
        <dbReference type="UniProtKB" id="P10231"/>
    </source>
</evidence>
<evidence type="ECO:0000256" key="2">
    <source>
        <dbReference type="SAM" id="MobiDB-lite"/>
    </source>
</evidence>
<evidence type="ECO:0000305" key="3"/>
<name>TEG5_PSHV1</name>
<gene>
    <name type="primary">sORF1</name>
</gene>
<feature type="chain" id="PRO_0000406851" description="Tegument protein UL47 homolog">
    <location>
        <begin position="1"/>
        <end position="605"/>
    </location>
</feature>
<feature type="region of interest" description="Disordered" evidence="2">
    <location>
        <begin position="1"/>
        <end position="75"/>
    </location>
</feature>
<feature type="compositionally biased region" description="Basic residues" evidence="2">
    <location>
        <begin position="8"/>
        <end position="17"/>
    </location>
</feature>
<feature type="compositionally biased region" description="Basic and acidic residues" evidence="2">
    <location>
        <begin position="54"/>
        <end position="69"/>
    </location>
</feature>
<dbReference type="EMBL" id="AY372243">
    <property type="protein sequence ID" value="AAQ73751.1"/>
    <property type="molecule type" value="Genomic_DNA"/>
</dbReference>
<dbReference type="RefSeq" id="NP_944445.1">
    <property type="nucleotide sequence ID" value="NC_005264.1"/>
</dbReference>
<dbReference type="GeneID" id="4237764"/>
<dbReference type="KEGG" id="vg:4237764"/>
<dbReference type="Proteomes" id="UP000006840">
    <property type="component" value="Segment"/>
</dbReference>
<dbReference type="GO" id="GO:0030430">
    <property type="term" value="C:host cell cytoplasm"/>
    <property type="evidence" value="ECO:0007669"/>
    <property type="project" value="UniProtKB-SubCell"/>
</dbReference>
<dbReference type="GO" id="GO:0042025">
    <property type="term" value="C:host cell nucleus"/>
    <property type="evidence" value="ECO:0007669"/>
    <property type="project" value="UniProtKB-SubCell"/>
</dbReference>
<dbReference type="GO" id="GO:0019033">
    <property type="term" value="C:viral tegument"/>
    <property type="evidence" value="ECO:0007669"/>
    <property type="project" value="UniProtKB-SubCell"/>
</dbReference>
<dbReference type="GO" id="GO:0006355">
    <property type="term" value="P:regulation of DNA-templated transcription"/>
    <property type="evidence" value="ECO:0007669"/>
    <property type="project" value="InterPro"/>
</dbReference>
<dbReference type="InterPro" id="IPR005029">
    <property type="entry name" value="Herpes_UL47"/>
</dbReference>
<dbReference type="Pfam" id="PF03362">
    <property type="entry name" value="Herpes_UL47"/>
    <property type="match status" value="1"/>
</dbReference>
<proteinExistence type="inferred from homology"/>
<organismHost>
    <name type="scientific">Amazona oratrix</name>
    <name type="common">yellow-headed parrot</name>
    <dbReference type="NCBI Taxonomy" id="152276"/>
</organismHost>
<organism>
    <name type="scientific">Psittacid herpesvirus 1 (isolate Amazon parrot/-/97-0001/1997)</name>
    <name type="common">PsHV-1</name>
    <name type="synonym">Pacheco's disease virus</name>
    <dbReference type="NCBI Taxonomy" id="670426"/>
    <lineage>
        <taxon>Viruses</taxon>
        <taxon>Duplodnaviria</taxon>
        <taxon>Heunggongvirae</taxon>
        <taxon>Peploviricota</taxon>
        <taxon>Herviviricetes</taxon>
        <taxon>Herpesvirales</taxon>
        <taxon>Orthoherpesviridae</taxon>
        <taxon>Alphaherpesvirinae</taxon>
        <taxon>Iltovirus</taxon>
        <taxon>Iltovirus psittacidalpha1</taxon>
        <taxon>Psittacid alphaherpesvirus 1</taxon>
    </lineage>
</organism>
<comment type="function">
    <text evidence="1">Tegument protein that can bind to various RNA transcripts. Plays a role in the attenuation of selective viral and cellular mRNA degradation by modulating the activity of host shutoff RNase UL41/VHS. Also plays a role in the primary envelopment of virions in the perinuclear space, probably by interacting with two nuclear egress proteins UL31 and UL34.</text>
</comment>
<comment type="subunit">
    <text evidence="1">Interacts with US3 kinase. Interacts with UL31 and UL34; these interactions seem important for efficient virion nuclear egress. Interacts with UL41/VHS.</text>
</comment>
<comment type="subcellular location">
    <subcellularLocation>
        <location evidence="1">Virion tegument</location>
    </subcellularLocation>
    <subcellularLocation>
        <location evidence="1">Host nucleus</location>
    </subcellularLocation>
    <subcellularLocation>
        <location evidence="1">Host cytoplasm</location>
    </subcellularLocation>
    <text evidence="1">Major tegument protein of the virion. Undergoes nucleocytoplasmic shuttling during infection. Localizes to the major sites of transcription in the infected cell nucleus.</text>
</comment>
<comment type="domain">
    <text evidence="1">The nuclear export signal is CRM1-dependent.</text>
</comment>
<comment type="PTM">
    <text evidence="1">Phosphorylated by US3. This phosphorylation is required for proper nuclear localization.</text>
</comment>
<comment type="similarity">
    <text evidence="3">Belongs to the alphaherpesvirinae HHV-1 UL47 family.</text>
</comment>
<accession>Q6UDF9</accession>